<reference key="1">
    <citation type="journal article" date="1996" name="Development">
        <title>A Dictystelium mutant with defective aggregate size determination.</title>
        <authorList>
            <person name="Brock D.A."/>
            <person name="Buczynski G."/>
            <person name="Spann T.P."/>
            <person name="Wood S.A."/>
            <person name="Cardelli J."/>
            <person name="Gomer R.H."/>
        </authorList>
    </citation>
    <scope>NUCLEOTIDE SEQUENCE [GENOMIC DNA]</scope>
</reference>
<reference key="2">
    <citation type="journal article" date="2005" name="Nature">
        <title>The genome of the social amoeba Dictyostelium discoideum.</title>
        <authorList>
            <person name="Eichinger L."/>
            <person name="Pachebat J.A."/>
            <person name="Gloeckner G."/>
            <person name="Rajandream M.A."/>
            <person name="Sucgang R."/>
            <person name="Berriman M."/>
            <person name="Song J."/>
            <person name="Olsen R."/>
            <person name="Szafranski K."/>
            <person name="Xu Q."/>
            <person name="Tunggal B."/>
            <person name="Kummerfeld S."/>
            <person name="Madera M."/>
            <person name="Konfortov B.A."/>
            <person name="Rivero F."/>
            <person name="Bankier A.T."/>
            <person name="Lehmann R."/>
            <person name="Hamlin N."/>
            <person name="Davies R."/>
            <person name="Gaudet P."/>
            <person name="Fey P."/>
            <person name="Pilcher K."/>
            <person name="Chen G."/>
            <person name="Saunders D."/>
            <person name="Sodergren E.J."/>
            <person name="Davis P."/>
            <person name="Kerhornou A."/>
            <person name="Nie X."/>
            <person name="Hall N."/>
            <person name="Anjard C."/>
            <person name="Hemphill L."/>
            <person name="Bason N."/>
            <person name="Farbrother P."/>
            <person name="Desany B."/>
            <person name="Just E."/>
            <person name="Morio T."/>
            <person name="Rost R."/>
            <person name="Churcher C.M."/>
            <person name="Cooper J."/>
            <person name="Haydock S."/>
            <person name="van Driessche N."/>
            <person name="Cronin A."/>
            <person name="Goodhead I."/>
            <person name="Muzny D.M."/>
            <person name="Mourier T."/>
            <person name="Pain A."/>
            <person name="Lu M."/>
            <person name="Harper D."/>
            <person name="Lindsay R."/>
            <person name="Hauser H."/>
            <person name="James K.D."/>
            <person name="Quiles M."/>
            <person name="Madan Babu M."/>
            <person name="Saito T."/>
            <person name="Buchrieser C."/>
            <person name="Wardroper A."/>
            <person name="Felder M."/>
            <person name="Thangavelu M."/>
            <person name="Johnson D."/>
            <person name="Knights A."/>
            <person name="Loulseged H."/>
            <person name="Mungall K.L."/>
            <person name="Oliver K."/>
            <person name="Price C."/>
            <person name="Quail M.A."/>
            <person name="Urushihara H."/>
            <person name="Hernandez J."/>
            <person name="Rabbinowitsch E."/>
            <person name="Steffen D."/>
            <person name="Sanders M."/>
            <person name="Ma J."/>
            <person name="Kohara Y."/>
            <person name="Sharp S."/>
            <person name="Simmonds M.N."/>
            <person name="Spiegler S."/>
            <person name="Tivey A."/>
            <person name="Sugano S."/>
            <person name="White B."/>
            <person name="Walker D."/>
            <person name="Woodward J.R."/>
            <person name="Winckler T."/>
            <person name="Tanaka Y."/>
            <person name="Shaulsky G."/>
            <person name="Schleicher M."/>
            <person name="Weinstock G.M."/>
            <person name="Rosenthal A."/>
            <person name="Cox E.C."/>
            <person name="Chisholm R.L."/>
            <person name="Gibbs R.A."/>
            <person name="Loomis W.F."/>
            <person name="Platzer M."/>
            <person name="Kay R.R."/>
            <person name="Williams J.G."/>
            <person name="Dear P.H."/>
            <person name="Noegel A.A."/>
            <person name="Barrell B.G."/>
            <person name="Kuspa A."/>
        </authorList>
    </citation>
    <scope>NUCLEOTIDE SEQUENCE [LARGE SCALE GENOMIC DNA]</scope>
    <source>
        <strain>AX4</strain>
    </source>
</reference>
<reference key="3">
    <citation type="journal article" date="1989" name="J. Mol. Biol.">
        <title>Organization of a gene family developmentally regulated during Dictyostelium discoideum spore germination.</title>
        <authorList>
            <person name="Giorda R."/>
            <person name="Ohmachi T."/>
            <person name="Ennis H.L."/>
        </authorList>
    </citation>
    <scope>NUCLEOTIDE SEQUENCE [GENOMIC DNA] OF 1-91</scope>
    <source>
        <strain>AX3</strain>
    </source>
</reference>
<organism>
    <name type="scientific">Dictyostelium discoideum</name>
    <name type="common">Social amoeba</name>
    <dbReference type="NCBI Taxonomy" id="44689"/>
    <lineage>
        <taxon>Eukaryota</taxon>
        <taxon>Amoebozoa</taxon>
        <taxon>Evosea</taxon>
        <taxon>Eumycetozoa</taxon>
        <taxon>Dictyostelia</taxon>
        <taxon>Dictyosteliales</taxon>
        <taxon>Dictyosteliaceae</taxon>
        <taxon>Dictyostelium</taxon>
    </lineage>
</organism>
<evidence type="ECO:0000305" key="1"/>
<proteinExistence type="evidence at transcript level"/>
<dbReference type="EMBL" id="U48706">
    <property type="protein sequence ID" value="AAB19231.1"/>
    <property type="molecule type" value="Genomic_DNA"/>
</dbReference>
<dbReference type="EMBL" id="AAFI02000103">
    <property type="protein sequence ID" value="EAL63602.1"/>
    <property type="molecule type" value="Genomic_DNA"/>
</dbReference>
<dbReference type="EMBL" id="M19469">
    <property type="protein sequence ID" value="AAA67428.1"/>
    <property type="molecule type" value="Genomic_DNA"/>
</dbReference>
<dbReference type="RefSeq" id="XP_637116.1">
    <property type="nucleotide sequence ID" value="XM_632024.1"/>
</dbReference>
<dbReference type="SMR" id="P54661"/>
<dbReference type="FunCoup" id="P54661">
    <property type="interactions" value="74"/>
</dbReference>
<dbReference type="STRING" id="44689.P54661"/>
<dbReference type="TCDB" id="1.C.59.4.1">
    <property type="family name" value="the clostridium perfringens enterotoxin (cpe) family"/>
</dbReference>
<dbReference type="PaxDb" id="44689-DDB0191525"/>
<dbReference type="EnsemblProtists" id="EAL63602">
    <property type="protein sequence ID" value="EAL63602"/>
    <property type="gene ID" value="DDB_G0287587"/>
</dbReference>
<dbReference type="GeneID" id="8626211"/>
<dbReference type="KEGG" id="ddi:DDB_G0287587"/>
<dbReference type="dictyBase" id="DDB_G0287587">
    <property type="gene designation" value="smlA"/>
</dbReference>
<dbReference type="VEuPathDB" id="AmoebaDB:DDB_G0287587"/>
<dbReference type="HOGENOM" id="CLU_085553_0_0_1"/>
<dbReference type="InParanoid" id="P54661"/>
<dbReference type="PhylomeDB" id="P54661"/>
<dbReference type="PRO" id="PR:P54661"/>
<dbReference type="Proteomes" id="UP000002195">
    <property type="component" value="Chromosome 5"/>
</dbReference>
<dbReference type="GO" id="GO:0005829">
    <property type="term" value="C:cytosol"/>
    <property type="evidence" value="ECO:0000314"/>
    <property type="project" value="dictyBase"/>
</dbReference>
<dbReference type="GO" id="GO:0045335">
    <property type="term" value="C:phagocytic vesicle"/>
    <property type="evidence" value="ECO:0007005"/>
    <property type="project" value="dictyBase"/>
</dbReference>
<dbReference type="GO" id="GO:0006974">
    <property type="term" value="P:DNA damage response"/>
    <property type="evidence" value="ECO:0000315"/>
    <property type="project" value="dictyBase"/>
</dbReference>
<dbReference type="GO" id="GO:0051156">
    <property type="term" value="P:glucose 6-phosphate metabolic process"/>
    <property type="evidence" value="ECO:0000315"/>
    <property type="project" value="dictyBase"/>
</dbReference>
<dbReference type="GO" id="GO:0042593">
    <property type="term" value="P:glucose homeostasis"/>
    <property type="evidence" value="ECO:0000315"/>
    <property type="project" value="dictyBase"/>
</dbReference>
<dbReference type="GO" id="GO:0031159">
    <property type="term" value="P:positive regulation of aggregate size involved in sorocarp development"/>
    <property type="evidence" value="ECO:0000316"/>
    <property type="project" value="dictyBase"/>
</dbReference>
<dbReference type="GO" id="GO:0050708">
    <property type="term" value="P:regulation of protein secretion"/>
    <property type="evidence" value="ECO:0000315"/>
    <property type="project" value="dictyBase"/>
</dbReference>
<dbReference type="GO" id="GO:0007165">
    <property type="term" value="P:signal transduction"/>
    <property type="evidence" value="ECO:0000315"/>
    <property type="project" value="dictyBase"/>
</dbReference>
<dbReference type="CDD" id="cd17904">
    <property type="entry name" value="PFM_monalysin-like"/>
    <property type="match status" value="1"/>
</dbReference>
<dbReference type="InterPro" id="IPR040927">
    <property type="entry name" value="BB_PF"/>
</dbReference>
<dbReference type="InterPro" id="IPR038768">
    <property type="entry name" value="SmlA"/>
</dbReference>
<dbReference type="PANTHER" id="PTHR35884:SF1">
    <property type="entry name" value="MONALYSIN BETA BARREL PORE-FORMING DOMAIN-CONTAINING PROTEIN-RELATED"/>
    <property type="match status" value="1"/>
</dbReference>
<dbReference type="PANTHER" id="PTHR35884">
    <property type="entry name" value="SMALL AGGREGATE FORMATION PROTEIN"/>
    <property type="match status" value="1"/>
</dbReference>
<dbReference type="Pfam" id="PF18063">
    <property type="entry name" value="BB_PF"/>
    <property type="match status" value="1"/>
</dbReference>
<name>SMLA_DICDI</name>
<protein>
    <recommendedName>
        <fullName>Small aggregate formation protein</fullName>
    </recommendedName>
</protein>
<sequence>MEEIKETVEKKNKEKKYLNDYKIISEGNNIKVLQKKDFKPKFSLVSYKNYEQNFDFENAKIVSTNFAIDRHIKMKNPPDPFVFIKMPSSKLVQSQLKLYYENEGYKDIPVWITPCSAFMRYIKSYPIVGTVTETMEKKKGFTNRFLSTSETKASVSVGFFGCESSMEVTSGYEYEDTVTSEETRSWSQTLNEGSYIVYQNVLVYAYIIYGGSYKPYIDQMNKFNPGLNIKFFREDKCIFFVPINRDDAFTLRYQDNTWDPVEYDVLIDYLGQNQDKWFSGGLP</sequence>
<comment type="function">
    <text>Knockout of the gene for this protein causes small aggregate formation. May regulate the secretion or processing of a secreted factor that regulates aggregate size.</text>
</comment>
<comment type="subcellular location">
    <subcellularLocation>
        <location>Cytoplasm</location>
    </subcellularLocation>
</comment>
<comment type="developmental stage">
    <text>Expressed in vegetative and early developing cells, its level decreases at about 10 hours of development.</text>
</comment>
<accession>P54661</accession>
<accession>Q23850</accession>
<accession>Q54K48</accession>
<feature type="chain" id="PRO_0000071975" description="Small aggregate formation protein">
    <location>
        <begin position="1"/>
        <end position="283"/>
    </location>
</feature>
<feature type="sequence conflict" description="In Ref. 1; AAB19231." evidence="1" ref="1">
    <original>E</original>
    <variation>V</variation>
    <location>
        <position position="9"/>
    </location>
</feature>
<feature type="sequence conflict" description="In Ref. 1; AAB19231." evidence="1" ref="1">
    <original>Q</original>
    <variation>P</variation>
    <location>
        <position position="34"/>
    </location>
</feature>
<feature type="sequence conflict" description="In Ref. 1; AAB19231." evidence="1" ref="1">
    <original>QNFDFENAKIVSTNF</original>
    <variation>PNLGFGKMLKLFQPIW</variation>
    <location>
        <begin position="52"/>
        <end position="66"/>
    </location>
</feature>
<gene>
    <name type="primary">smlA</name>
    <name type="ORF">DDB_G0287587</name>
</gene>
<keyword id="KW-0963">Cytoplasm</keyword>
<keyword id="KW-1185">Reference proteome</keyword>